<proteinExistence type="inferred from homology"/>
<accession>Q39JF4</accession>
<dbReference type="EC" id="2.4.99.17" evidence="1"/>
<dbReference type="EMBL" id="CP000151">
    <property type="protein sequence ID" value="ABB07412.1"/>
    <property type="molecule type" value="Genomic_DNA"/>
</dbReference>
<dbReference type="RefSeq" id="WP_011350998.1">
    <property type="nucleotide sequence ID" value="NC_007510.1"/>
</dbReference>
<dbReference type="SMR" id="Q39JF4"/>
<dbReference type="GeneID" id="45093723"/>
<dbReference type="KEGG" id="bur:Bcep18194_A3811"/>
<dbReference type="PATRIC" id="fig|482957.22.peg.673"/>
<dbReference type="HOGENOM" id="CLU_039110_1_0_4"/>
<dbReference type="UniPathway" id="UPA00392"/>
<dbReference type="Proteomes" id="UP000002705">
    <property type="component" value="Chromosome 1"/>
</dbReference>
<dbReference type="GO" id="GO:0005737">
    <property type="term" value="C:cytoplasm"/>
    <property type="evidence" value="ECO:0007669"/>
    <property type="project" value="UniProtKB-SubCell"/>
</dbReference>
<dbReference type="GO" id="GO:0051075">
    <property type="term" value="F:S-adenosylmethionine:tRNA ribosyltransferase-isomerase activity"/>
    <property type="evidence" value="ECO:0007669"/>
    <property type="project" value="UniProtKB-EC"/>
</dbReference>
<dbReference type="GO" id="GO:0008616">
    <property type="term" value="P:queuosine biosynthetic process"/>
    <property type="evidence" value="ECO:0007669"/>
    <property type="project" value="UniProtKB-UniRule"/>
</dbReference>
<dbReference type="GO" id="GO:0002099">
    <property type="term" value="P:tRNA wobble guanine modification"/>
    <property type="evidence" value="ECO:0007669"/>
    <property type="project" value="TreeGrafter"/>
</dbReference>
<dbReference type="FunFam" id="3.40.1780.10:FF:000001">
    <property type="entry name" value="S-adenosylmethionine:tRNA ribosyltransferase-isomerase"/>
    <property type="match status" value="1"/>
</dbReference>
<dbReference type="Gene3D" id="2.40.10.240">
    <property type="entry name" value="QueA-like"/>
    <property type="match status" value="1"/>
</dbReference>
<dbReference type="Gene3D" id="3.40.1780.10">
    <property type="entry name" value="QueA-like"/>
    <property type="match status" value="1"/>
</dbReference>
<dbReference type="HAMAP" id="MF_00113">
    <property type="entry name" value="QueA"/>
    <property type="match status" value="1"/>
</dbReference>
<dbReference type="InterPro" id="IPR003699">
    <property type="entry name" value="QueA"/>
</dbReference>
<dbReference type="InterPro" id="IPR042118">
    <property type="entry name" value="QueA_dom1"/>
</dbReference>
<dbReference type="InterPro" id="IPR042119">
    <property type="entry name" value="QueA_dom2"/>
</dbReference>
<dbReference type="InterPro" id="IPR036100">
    <property type="entry name" value="QueA_sf"/>
</dbReference>
<dbReference type="NCBIfam" id="NF001140">
    <property type="entry name" value="PRK00147.1"/>
    <property type="match status" value="1"/>
</dbReference>
<dbReference type="NCBIfam" id="TIGR00113">
    <property type="entry name" value="queA"/>
    <property type="match status" value="1"/>
</dbReference>
<dbReference type="PANTHER" id="PTHR30307">
    <property type="entry name" value="S-ADENOSYLMETHIONINE:TRNA RIBOSYLTRANSFERASE-ISOMERASE"/>
    <property type="match status" value="1"/>
</dbReference>
<dbReference type="PANTHER" id="PTHR30307:SF0">
    <property type="entry name" value="S-ADENOSYLMETHIONINE:TRNA RIBOSYLTRANSFERASE-ISOMERASE"/>
    <property type="match status" value="1"/>
</dbReference>
<dbReference type="Pfam" id="PF02547">
    <property type="entry name" value="Queuosine_synth"/>
    <property type="match status" value="1"/>
</dbReference>
<dbReference type="SUPFAM" id="SSF111337">
    <property type="entry name" value="QueA-like"/>
    <property type="match status" value="1"/>
</dbReference>
<comment type="function">
    <text evidence="1">Transfers and isomerizes the ribose moiety from AdoMet to the 7-aminomethyl group of 7-deazaguanine (preQ1-tRNA) to give epoxyqueuosine (oQ-tRNA).</text>
</comment>
<comment type="catalytic activity">
    <reaction evidence="1">
        <text>7-aminomethyl-7-carbaguanosine(34) in tRNA + S-adenosyl-L-methionine = epoxyqueuosine(34) in tRNA + adenine + L-methionine + 2 H(+)</text>
        <dbReference type="Rhea" id="RHEA:32155"/>
        <dbReference type="Rhea" id="RHEA-COMP:10342"/>
        <dbReference type="Rhea" id="RHEA-COMP:18582"/>
        <dbReference type="ChEBI" id="CHEBI:15378"/>
        <dbReference type="ChEBI" id="CHEBI:16708"/>
        <dbReference type="ChEBI" id="CHEBI:57844"/>
        <dbReference type="ChEBI" id="CHEBI:59789"/>
        <dbReference type="ChEBI" id="CHEBI:82833"/>
        <dbReference type="ChEBI" id="CHEBI:194443"/>
        <dbReference type="EC" id="2.4.99.17"/>
    </reaction>
</comment>
<comment type="pathway">
    <text evidence="1">tRNA modification; tRNA-queuosine biosynthesis.</text>
</comment>
<comment type="subunit">
    <text evidence="1">Monomer.</text>
</comment>
<comment type="subcellular location">
    <subcellularLocation>
        <location evidence="1">Cytoplasm</location>
    </subcellularLocation>
</comment>
<comment type="similarity">
    <text evidence="1">Belongs to the QueA family.</text>
</comment>
<protein>
    <recommendedName>
        <fullName evidence="1">S-adenosylmethionine:tRNA ribosyltransferase-isomerase</fullName>
        <ecNumber evidence="1">2.4.99.17</ecNumber>
    </recommendedName>
    <alternativeName>
        <fullName evidence="1">Queuosine biosynthesis protein QueA</fullName>
    </alternativeName>
</protein>
<name>QUEA_BURL3</name>
<gene>
    <name evidence="1" type="primary">queA</name>
    <name type="ordered locus">Bcep18194_A3811</name>
</gene>
<reference key="1">
    <citation type="submission" date="2005-10" db="EMBL/GenBank/DDBJ databases">
        <title>Complete sequence of chromosome 1 of Burkholderia sp. 383.</title>
        <authorList>
            <consortium name="US DOE Joint Genome Institute"/>
            <person name="Copeland A."/>
            <person name="Lucas S."/>
            <person name="Lapidus A."/>
            <person name="Barry K."/>
            <person name="Detter J.C."/>
            <person name="Glavina T."/>
            <person name="Hammon N."/>
            <person name="Israni S."/>
            <person name="Pitluck S."/>
            <person name="Chain P."/>
            <person name="Malfatti S."/>
            <person name="Shin M."/>
            <person name="Vergez L."/>
            <person name="Schmutz J."/>
            <person name="Larimer F."/>
            <person name="Land M."/>
            <person name="Kyrpides N."/>
            <person name="Lykidis A."/>
            <person name="Richardson P."/>
        </authorList>
    </citation>
    <scope>NUCLEOTIDE SEQUENCE [LARGE SCALE GENOMIC DNA]</scope>
    <source>
        <strain>ATCC 17760 / DSM 23089 / LMG 22485 / NCIMB 9086 / R18194 / 383</strain>
    </source>
</reference>
<feature type="chain" id="PRO_0000231326" description="S-adenosylmethionine:tRNA ribosyltransferase-isomerase">
    <location>
        <begin position="1"/>
        <end position="355"/>
    </location>
</feature>
<keyword id="KW-0963">Cytoplasm</keyword>
<keyword id="KW-0671">Queuosine biosynthesis</keyword>
<keyword id="KW-0949">S-adenosyl-L-methionine</keyword>
<keyword id="KW-0808">Transferase</keyword>
<evidence type="ECO:0000255" key="1">
    <source>
        <dbReference type="HAMAP-Rule" id="MF_00113"/>
    </source>
</evidence>
<sequence>MFTLSDFDFNLPPELIAQTALPDRTASRLLEVDGTVAPARLVDRHFTELPSCISAGDLLVFNDTKVLKARFFGQKASGGKIEVLIERVTGTHTALAQIRASKSPGAGTTLRLADAFDVTVGERVDPFFTLNFPEPCLDLIEQYGRLPLPPYIEHDPDATDETRYQTVYASNPGAVAAPTAGLHFDQPMLDRLDAMGVERATLTLHVGAGTFQPVRVDNIAEHKMHSEWYDLPQSLVDKIAATRARGGNVIAVGTTSMRALEAAARAADEAGRPLAATQAETDIFITPGYRFRVVDRLVTNFHLPKSTLLMLVSAFAGVETIRAAYRHAIEQRYRFFSYGDAMLLTRRDTPEAPLA</sequence>
<organism>
    <name type="scientific">Burkholderia lata (strain ATCC 17760 / DSM 23089 / LMG 22485 / NCIMB 9086 / R18194 / 383)</name>
    <dbReference type="NCBI Taxonomy" id="482957"/>
    <lineage>
        <taxon>Bacteria</taxon>
        <taxon>Pseudomonadati</taxon>
        <taxon>Pseudomonadota</taxon>
        <taxon>Betaproteobacteria</taxon>
        <taxon>Burkholderiales</taxon>
        <taxon>Burkholderiaceae</taxon>
        <taxon>Burkholderia</taxon>
        <taxon>Burkholderia cepacia complex</taxon>
    </lineage>
</organism>